<sequence>MSAWRKAGISYAAYLNVAAQAIRSSLKTELQTASVLNRSQTDAFYTQYKNGTAASEPTPITK</sequence>
<dbReference type="EMBL" id="X64767">
    <property type="protein sequence ID" value="CAA46014.1"/>
    <property type="molecule type" value="Genomic_DNA"/>
</dbReference>
<dbReference type="EMBL" id="Z73627">
    <property type="protein sequence ID" value="CAA98007.1"/>
    <property type="molecule type" value="Genomic_DNA"/>
</dbReference>
<dbReference type="EMBL" id="AY558140">
    <property type="protein sequence ID" value="AAS56466.1"/>
    <property type="molecule type" value="Genomic_DNA"/>
</dbReference>
<dbReference type="EMBL" id="BK006949">
    <property type="protein sequence ID" value="DAA11165.1"/>
    <property type="molecule type" value="Genomic_DNA"/>
</dbReference>
<dbReference type="PIR" id="A45315">
    <property type="entry name" value="A45315"/>
</dbReference>
<dbReference type="RefSeq" id="NP_015052.1">
    <property type="nucleotide sequence ID" value="NM_001184085.1"/>
</dbReference>
<dbReference type="PDB" id="2HLD">
    <property type="method" value="X-ray"/>
    <property type="resolution" value="2.80 A"/>
    <property type="chains" value="1/I/R=2-62"/>
</dbReference>
<dbReference type="PDB" id="2WPD">
    <property type="method" value="X-ray"/>
    <property type="resolution" value="3.43 A"/>
    <property type="chains" value="I=2-62"/>
</dbReference>
<dbReference type="PDB" id="3FKS">
    <property type="method" value="X-ray"/>
    <property type="resolution" value="3.59 A"/>
    <property type="chains" value="1/I/R=2-62"/>
</dbReference>
<dbReference type="PDB" id="3OE7">
    <property type="method" value="X-ray"/>
    <property type="resolution" value="3.19 A"/>
    <property type="chains" value="1/I/R=2-62"/>
</dbReference>
<dbReference type="PDB" id="3OEE">
    <property type="method" value="X-ray"/>
    <property type="resolution" value="2.74 A"/>
    <property type="chains" value="1/I/R=2-62"/>
</dbReference>
<dbReference type="PDB" id="3OEH">
    <property type="method" value="X-ray"/>
    <property type="resolution" value="3.00 A"/>
    <property type="chains" value="1/I/R=2-62"/>
</dbReference>
<dbReference type="PDB" id="3OFN">
    <property type="method" value="X-ray"/>
    <property type="resolution" value="3.20 A"/>
    <property type="chains" value="I/R=2-62"/>
</dbReference>
<dbReference type="PDB" id="3ZIA">
    <property type="method" value="X-ray"/>
    <property type="resolution" value="2.50 A"/>
    <property type="chains" value="I/S=2-62"/>
</dbReference>
<dbReference type="PDB" id="4B2Q">
    <property type="method" value="EM"/>
    <property type="resolution" value="37.00 A"/>
    <property type="chains" value="I/i=2-60"/>
</dbReference>
<dbReference type="PDB" id="6CP3">
    <property type="method" value="EM"/>
    <property type="resolution" value="3.80 A"/>
    <property type="chains" value="I=2-62"/>
</dbReference>
<dbReference type="PDB" id="6CP6">
    <property type="method" value="EM"/>
    <property type="resolution" value="3.60 A"/>
    <property type="chains" value="I=2-62"/>
</dbReference>
<dbReference type="PDB" id="7MD2">
    <property type="method" value="EM"/>
    <property type="resolution" value="3.10 A"/>
    <property type="chains" value="H=2-62"/>
</dbReference>
<dbReference type="PDB" id="7MD3">
    <property type="method" value="EM"/>
    <property type="resolution" value="3.30 A"/>
    <property type="chains" value="H=2-62"/>
</dbReference>
<dbReference type="PDB" id="7TJY">
    <property type="method" value="EM"/>
    <property type="resolution" value="3.80 A"/>
    <property type="chains" value="I=2-62"/>
</dbReference>
<dbReference type="PDB" id="7TJZ">
    <property type="method" value="EM"/>
    <property type="resolution" value="4.40 A"/>
    <property type="chains" value="I=2-62"/>
</dbReference>
<dbReference type="PDB" id="7TK0">
    <property type="method" value="EM"/>
    <property type="resolution" value="4.40 A"/>
    <property type="chains" value="I=2-62"/>
</dbReference>
<dbReference type="PDB" id="7TK1">
    <property type="method" value="EM"/>
    <property type="resolution" value="7.10 A"/>
    <property type="chains" value="I=2-62"/>
</dbReference>
<dbReference type="PDB" id="7TK2">
    <property type="method" value="EM"/>
    <property type="resolution" value="6.50 A"/>
    <property type="chains" value="I=2-62"/>
</dbReference>
<dbReference type="PDB" id="7TK3">
    <property type="method" value="EM"/>
    <property type="resolution" value="6.30 A"/>
    <property type="chains" value="I=2-62"/>
</dbReference>
<dbReference type="PDB" id="7TK4">
    <property type="method" value="EM"/>
    <property type="resolution" value="7.00 A"/>
    <property type="chains" value="I=2-62"/>
</dbReference>
<dbReference type="PDB" id="7TK5">
    <property type="method" value="EM"/>
    <property type="resolution" value="7.80 A"/>
    <property type="chains" value="I=2-62"/>
</dbReference>
<dbReference type="PDB" id="7TK6">
    <property type="method" value="EM"/>
    <property type="resolution" value="6.50 A"/>
    <property type="chains" value="I=2-62"/>
</dbReference>
<dbReference type="PDB" id="7TK7">
    <property type="method" value="EM"/>
    <property type="resolution" value="6.70 A"/>
    <property type="chains" value="I=2-62"/>
</dbReference>
<dbReference type="PDB" id="7TK8">
    <property type="method" value="EM"/>
    <property type="resolution" value="4.70 A"/>
    <property type="chains" value="I=2-62"/>
</dbReference>
<dbReference type="PDB" id="7TK9">
    <property type="method" value="EM"/>
    <property type="resolution" value="6.00 A"/>
    <property type="chains" value="I=2-62"/>
</dbReference>
<dbReference type="PDB" id="7TKA">
    <property type="method" value="EM"/>
    <property type="resolution" value="7.10 A"/>
    <property type="chains" value="I=2-62"/>
</dbReference>
<dbReference type="PDB" id="7TKB">
    <property type="method" value="EM"/>
    <property type="resolution" value="6.30 A"/>
    <property type="chains" value="I=2-62"/>
</dbReference>
<dbReference type="PDB" id="7TKC">
    <property type="method" value="EM"/>
    <property type="resolution" value="5.80 A"/>
    <property type="chains" value="I=2-62"/>
</dbReference>
<dbReference type="PDB" id="7TKD">
    <property type="method" value="EM"/>
    <property type="resolution" value="7.70 A"/>
    <property type="chains" value="I=2-62"/>
</dbReference>
<dbReference type="PDB" id="7TKE">
    <property type="method" value="EM"/>
    <property type="resolution" value="7.10 A"/>
    <property type="chains" value="I=2-62"/>
</dbReference>
<dbReference type="PDB" id="7TKF">
    <property type="method" value="EM"/>
    <property type="resolution" value="7.10 A"/>
    <property type="chains" value="I=2-62"/>
</dbReference>
<dbReference type="PDB" id="7TKG">
    <property type="method" value="EM"/>
    <property type="resolution" value="4.50 A"/>
    <property type="chains" value="I=2-62"/>
</dbReference>
<dbReference type="PDB" id="7TKH">
    <property type="method" value="EM"/>
    <property type="resolution" value="4.40 A"/>
    <property type="chains" value="I=2-62"/>
</dbReference>
<dbReference type="PDB" id="7TKI">
    <property type="method" value="EM"/>
    <property type="resolution" value="7.10 A"/>
    <property type="chains" value="I=2-62"/>
</dbReference>
<dbReference type="PDB" id="7TKJ">
    <property type="method" value="EM"/>
    <property type="resolution" value="7.50 A"/>
    <property type="chains" value="I=2-62"/>
</dbReference>
<dbReference type="PDB" id="7TKK">
    <property type="method" value="EM"/>
    <property type="resolution" value="7.30 A"/>
    <property type="chains" value="I=2-62"/>
</dbReference>
<dbReference type="PDB" id="7TKL">
    <property type="method" value="EM"/>
    <property type="resolution" value="6.40 A"/>
    <property type="chains" value="I=2-62"/>
</dbReference>
<dbReference type="PDB" id="7TKM">
    <property type="method" value="EM"/>
    <property type="resolution" value="4.50 A"/>
    <property type="chains" value="I=2-62"/>
</dbReference>
<dbReference type="PDB" id="7TKN">
    <property type="method" value="EM"/>
    <property type="resolution" value="7.10 A"/>
    <property type="chains" value="I=2-62"/>
</dbReference>
<dbReference type="PDB" id="7TKO">
    <property type="method" value="EM"/>
    <property type="resolution" value="4.80 A"/>
    <property type="chains" value="I=2-62"/>
</dbReference>
<dbReference type="PDB" id="7TKP">
    <property type="method" value="EM"/>
    <property type="resolution" value="4.60 A"/>
    <property type="chains" value="I=2-62"/>
</dbReference>
<dbReference type="PDB" id="7TKQ">
    <property type="method" value="EM"/>
    <property type="resolution" value="4.50 A"/>
    <property type="chains" value="I=2-62"/>
</dbReference>
<dbReference type="PDB" id="7TKR">
    <property type="method" value="EM"/>
    <property type="resolution" value="6.50 A"/>
    <property type="chains" value="I=2-62"/>
</dbReference>
<dbReference type="PDB" id="7TKS">
    <property type="method" value="EM"/>
    <property type="resolution" value="7.50 A"/>
    <property type="chains" value="I=2-62"/>
</dbReference>
<dbReference type="PDB" id="8F29">
    <property type="method" value="EM"/>
    <property type="resolution" value="4.00 A"/>
    <property type="chains" value="I=2-60"/>
</dbReference>
<dbReference type="PDB" id="8F39">
    <property type="method" value="EM"/>
    <property type="resolution" value="3.50 A"/>
    <property type="chains" value="I=2-60"/>
</dbReference>
<dbReference type="PDB" id="8FKJ">
    <property type="method" value="EM"/>
    <property type="resolution" value="4.20 A"/>
    <property type="chains" value="I=2-60"/>
</dbReference>
<dbReference type="PDB" id="8FL8">
    <property type="method" value="EM"/>
    <property type="resolution" value="4.20 A"/>
    <property type="chains" value="I=2-60"/>
</dbReference>
<dbReference type="PDBsum" id="2HLD"/>
<dbReference type="PDBsum" id="2WPD"/>
<dbReference type="PDBsum" id="3FKS"/>
<dbReference type="PDBsum" id="3OE7"/>
<dbReference type="PDBsum" id="3OEE"/>
<dbReference type="PDBsum" id="3OEH"/>
<dbReference type="PDBsum" id="3OFN"/>
<dbReference type="PDBsum" id="3ZIA"/>
<dbReference type="PDBsum" id="4B2Q"/>
<dbReference type="PDBsum" id="6CP3"/>
<dbReference type="PDBsum" id="6CP6"/>
<dbReference type="PDBsum" id="7MD2"/>
<dbReference type="PDBsum" id="7MD3"/>
<dbReference type="PDBsum" id="7TJY"/>
<dbReference type="PDBsum" id="7TJZ"/>
<dbReference type="PDBsum" id="7TK0"/>
<dbReference type="PDBsum" id="7TK1"/>
<dbReference type="PDBsum" id="7TK2"/>
<dbReference type="PDBsum" id="7TK3"/>
<dbReference type="PDBsum" id="7TK4"/>
<dbReference type="PDBsum" id="7TK5"/>
<dbReference type="PDBsum" id="7TK6"/>
<dbReference type="PDBsum" id="7TK7"/>
<dbReference type="PDBsum" id="7TK8"/>
<dbReference type="PDBsum" id="7TK9"/>
<dbReference type="PDBsum" id="7TKA"/>
<dbReference type="PDBsum" id="7TKB"/>
<dbReference type="PDBsum" id="7TKC"/>
<dbReference type="PDBsum" id="7TKD"/>
<dbReference type="PDBsum" id="7TKE"/>
<dbReference type="PDBsum" id="7TKF"/>
<dbReference type="PDBsum" id="7TKG"/>
<dbReference type="PDBsum" id="7TKH"/>
<dbReference type="PDBsum" id="7TKI"/>
<dbReference type="PDBsum" id="7TKJ"/>
<dbReference type="PDBsum" id="7TKK"/>
<dbReference type="PDBsum" id="7TKL"/>
<dbReference type="PDBsum" id="7TKM"/>
<dbReference type="PDBsum" id="7TKN"/>
<dbReference type="PDBsum" id="7TKO"/>
<dbReference type="PDBsum" id="7TKP"/>
<dbReference type="PDBsum" id="7TKQ"/>
<dbReference type="PDBsum" id="7TKR"/>
<dbReference type="PDBsum" id="7TKS"/>
<dbReference type="PDBsum" id="8F29"/>
<dbReference type="PDBsum" id="8F39"/>
<dbReference type="PDBsum" id="8FKJ"/>
<dbReference type="PDBsum" id="8FL8"/>
<dbReference type="EMDB" id="EMD-23763"/>
<dbReference type="EMDB" id="EMD-23764"/>
<dbReference type="EMDB" id="EMD-25946"/>
<dbReference type="EMDB" id="EMD-25947"/>
<dbReference type="EMDB" id="EMD-25948"/>
<dbReference type="EMDB" id="EMD-25949"/>
<dbReference type="EMDB" id="EMD-25954"/>
<dbReference type="EMDB" id="EMD-25955"/>
<dbReference type="EMDB" id="EMD-25956"/>
<dbReference type="EMDB" id="EMD-25957"/>
<dbReference type="EMDB" id="EMD-25958"/>
<dbReference type="EMDB" id="EMD-25959"/>
<dbReference type="EMDB" id="EMD-25960"/>
<dbReference type="EMDB" id="EMD-25961"/>
<dbReference type="EMDB" id="EMD-25962"/>
<dbReference type="EMDB" id="EMD-25963"/>
<dbReference type="EMDB" id="EMD-25964"/>
<dbReference type="EMDB" id="EMD-25965"/>
<dbReference type="EMDB" id="EMD-25966"/>
<dbReference type="EMDB" id="EMD-25967"/>
<dbReference type="EMDB" id="EMD-25968"/>
<dbReference type="EMDB" id="EMD-25969"/>
<dbReference type="EMDB" id="EMD-25970"/>
<dbReference type="EMDB" id="EMD-25971"/>
<dbReference type="EMDB" id="EMD-25972"/>
<dbReference type="EMDB" id="EMD-25973"/>
<dbReference type="EMDB" id="EMD-25974"/>
<dbReference type="EMDB" id="EMD-25975"/>
<dbReference type="EMDB" id="EMD-25976"/>
<dbReference type="EMDB" id="EMD-25977"/>
<dbReference type="EMDB" id="EMD-25978"/>
<dbReference type="EMDB" id="EMD-25979"/>
<dbReference type="EMDB" id="EMD-25980"/>
<dbReference type="EMDB" id="EMD-28809"/>
<dbReference type="EMDB" id="EMD-28835"/>
<dbReference type="EMDB" id="EMD-29250"/>
<dbReference type="EMDB" id="EMD-29270"/>
<dbReference type="EMDB" id="EMD-7546"/>
<dbReference type="EMDB" id="EMD-7548"/>
<dbReference type="SMR" id="P21306"/>
<dbReference type="BioGRID" id="35942">
    <property type="interactions" value="94"/>
</dbReference>
<dbReference type="ComplexPortal" id="CPX-3281">
    <property type="entry name" value="Mitochondrial proton-transporting ATP synthase complex"/>
</dbReference>
<dbReference type="DIP" id="DIP-3031N"/>
<dbReference type="FunCoup" id="P21306">
    <property type="interactions" value="196"/>
</dbReference>
<dbReference type="IntAct" id="P21306">
    <property type="interactions" value="26"/>
</dbReference>
<dbReference type="MINT" id="P21306"/>
<dbReference type="STRING" id="4932.YPL271W"/>
<dbReference type="TCDB" id="3.A.2.1.3">
    <property type="family name" value="the h+- or na+-translocating f-type, v-type and a-type atpase (f-atpase) superfamily"/>
</dbReference>
<dbReference type="iPTMnet" id="P21306"/>
<dbReference type="PaxDb" id="4932-YPL271W"/>
<dbReference type="PeptideAtlas" id="P21306"/>
<dbReference type="EnsemblFungi" id="YPL271W_mRNA">
    <property type="protein sequence ID" value="YPL271W"/>
    <property type="gene ID" value="YPL271W"/>
</dbReference>
<dbReference type="GeneID" id="855857"/>
<dbReference type="KEGG" id="sce:YPL271W"/>
<dbReference type="AGR" id="SGD:S000006192"/>
<dbReference type="SGD" id="S000006192">
    <property type="gene designation" value="ATP15"/>
</dbReference>
<dbReference type="VEuPathDB" id="FungiDB:YPL271W"/>
<dbReference type="eggNOG" id="KOG3495">
    <property type="taxonomic scope" value="Eukaryota"/>
</dbReference>
<dbReference type="HOGENOM" id="CLU_187039_1_0_1"/>
<dbReference type="InParanoid" id="P21306"/>
<dbReference type="OMA" id="YTKYEKG"/>
<dbReference type="OrthoDB" id="269124at2759"/>
<dbReference type="BioCyc" id="YEAST:G3O-34153-MONOMER"/>
<dbReference type="BioGRID-ORCS" id="855857">
    <property type="hits" value="10 hits in 10 CRISPR screens"/>
</dbReference>
<dbReference type="EvolutionaryTrace" id="P21306"/>
<dbReference type="PRO" id="PR:P21306"/>
<dbReference type="Proteomes" id="UP000002311">
    <property type="component" value="Chromosome XVI"/>
</dbReference>
<dbReference type="RNAct" id="P21306">
    <property type="molecule type" value="protein"/>
</dbReference>
<dbReference type="GO" id="GO:0005743">
    <property type="term" value="C:mitochondrial inner membrane"/>
    <property type="evidence" value="ECO:0000314"/>
    <property type="project" value="ComplexPortal"/>
</dbReference>
<dbReference type="GO" id="GO:0005739">
    <property type="term" value="C:mitochondrion"/>
    <property type="evidence" value="ECO:0007005"/>
    <property type="project" value="SGD"/>
</dbReference>
<dbReference type="GO" id="GO:0045259">
    <property type="term" value="C:proton-transporting ATP synthase complex"/>
    <property type="evidence" value="ECO:0000314"/>
    <property type="project" value="SGD"/>
</dbReference>
<dbReference type="GO" id="GO:0046933">
    <property type="term" value="F:proton-transporting ATP synthase activity, rotational mechanism"/>
    <property type="evidence" value="ECO:0007669"/>
    <property type="project" value="InterPro"/>
</dbReference>
<dbReference type="GO" id="GO:0015986">
    <property type="term" value="P:proton motive force-driven ATP synthesis"/>
    <property type="evidence" value="ECO:0000314"/>
    <property type="project" value="ComplexPortal"/>
</dbReference>
<dbReference type="GO" id="GO:0042776">
    <property type="term" value="P:proton motive force-driven mitochondrial ATP synthesis"/>
    <property type="evidence" value="ECO:0000318"/>
    <property type="project" value="GO_Central"/>
</dbReference>
<dbReference type="CDD" id="cd12153">
    <property type="entry name" value="F1-ATPase_epsilon"/>
    <property type="match status" value="1"/>
</dbReference>
<dbReference type="FunFam" id="1.10.1620.20:FF:000007">
    <property type="entry name" value="ATP synthase subunit epsilon, mitochondrial"/>
    <property type="match status" value="1"/>
</dbReference>
<dbReference type="Gene3D" id="1.10.1620.20">
    <property type="entry name" value="ATP synthase, F1 complex, epsilon subunit superfamily, mitochondrial"/>
    <property type="match status" value="1"/>
</dbReference>
<dbReference type="InterPro" id="IPR006721">
    <property type="entry name" value="ATP_synth_F1_esu_mt"/>
</dbReference>
<dbReference type="InterPro" id="IPR036742">
    <property type="entry name" value="ATP_synth_F1_esu_sf_mt"/>
</dbReference>
<dbReference type="PANTHER" id="PTHR12448">
    <property type="entry name" value="ATP SYNTHASE EPSILON CHAIN, MITOCHONDRIAL"/>
    <property type="match status" value="1"/>
</dbReference>
<dbReference type="PANTHER" id="PTHR12448:SF0">
    <property type="entry name" value="ATP SYNTHASE SUBUNIT EPSILON, MITOCHONDRIAL"/>
    <property type="match status" value="1"/>
</dbReference>
<dbReference type="Pfam" id="PF04627">
    <property type="entry name" value="ATP-synt_Eps"/>
    <property type="match status" value="1"/>
</dbReference>
<dbReference type="SUPFAM" id="SSF48690">
    <property type="entry name" value="Epsilon subunit of mitochondrial F1F0-ATP synthase"/>
    <property type="match status" value="1"/>
</dbReference>
<accession>P21306</accession>
<accession>D6W399</accession>
<organism>
    <name type="scientific">Saccharomyces cerevisiae (strain ATCC 204508 / S288c)</name>
    <name type="common">Baker's yeast</name>
    <dbReference type="NCBI Taxonomy" id="559292"/>
    <lineage>
        <taxon>Eukaryota</taxon>
        <taxon>Fungi</taxon>
        <taxon>Dikarya</taxon>
        <taxon>Ascomycota</taxon>
        <taxon>Saccharomycotina</taxon>
        <taxon>Saccharomycetes</taxon>
        <taxon>Saccharomycetales</taxon>
        <taxon>Saccharomycetaceae</taxon>
        <taxon>Saccharomyces</taxon>
    </lineage>
</organism>
<feature type="initiator methionine" description="Removed" evidence="2">
    <location>
        <position position="1"/>
    </location>
</feature>
<feature type="chain" id="PRO_0000071667" description="ATP synthase subunit epsilon, mitochondrial">
    <location>
        <begin position="2"/>
        <end position="62"/>
    </location>
</feature>
<feature type="modified residue" description="Phosphothreonine" evidence="4">
    <location>
        <position position="52"/>
    </location>
</feature>
<feature type="turn" evidence="5">
    <location>
        <begin position="4"/>
        <end position="6"/>
    </location>
</feature>
<feature type="helix" evidence="5">
    <location>
        <begin position="11"/>
        <end position="24"/>
    </location>
</feature>
<feature type="helix" evidence="5">
    <location>
        <begin position="28"/>
        <end position="30"/>
    </location>
</feature>
<feature type="helix" evidence="5">
    <location>
        <begin position="33"/>
        <end position="37"/>
    </location>
</feature>
<feature type="strand" evidence="5">
    <location>
        <begin position="44"/>
        <end position="47"/>
    </location>
</feature>
<name>ATP5E_YEAST</name>
<evidence type="ECO:0000269" key="1">
    <source>
    </source>
</evidence>
<evidence type="ECO:0000269" key="2">
    <source>
    </source>
</evidence>
<evidence type="ECO:0000305" key="3"/>
<evidence type="ECO:0007744" key="4">
    <source>
    </source>
</evidence>
<evidence type="ECO:0007829" key="5">
    <source>
        <dbReference type="PDB" id="3ZIA"/>
    </source>
</evidence>
<reference key="1">
    <citation type="journal article" date="1993" name="J. Biol. Chem.">
        <title>ATP synthase of yeast mitochondria. Isolation and disruption of the ATP epsilon gene.</title>
        <authorList>
            <person name="Guelin E."/>
            <person name="Chevallier J."/>
            <person name="Rigoulet M."/>
            <person name="Guerin B."/>
            <person name="Velours J."/>
        </authorList>
    </citation>
    <scope>NUCLEOTIDE SEQUENCE [GENOMIC DNA]</scope>
    <source>
        <strain>D273-10B/A/H/U</strain>
    </source>
</reference>
<reference key="2">
    <citation type="journal article" date="1997" name="Nature">
        <title>The nucleotide sequence of Saccharomyces cerevisiae chromosome XVI.</title>
        <authorList>
            <person name="Bussey H."/>
            <person name="Storms R.K."/>
            <person name="Ahmed A."/>
            <person name="Albermann K."/>
            <person name="Allen E."/>
            <person name="Ansorge W."/>
            <person name="Araujo R."/>
            <person name="Aparicio A."/>
            <person name="Barrell B.G."/>
            <person name="Badcock K."/>
            <person name="Benes V."/>
            <person name="Botstein D."/>
            <person name="Bowman S."/>
            <person name="Brueckner M."/>
            <person name="Carpenter J."/>
            <person name="Cherry J.M."/>
            <person name="Chung E."/>
            <person name="Churcher C.M."/>
            <person name="Coster F."/>
            <person name="Davis K."/>
            <person name="Davis R.W."/>
            <person name="Dietrich F.S."/>
            <person name="Delius H."/>
            <person name="DiPaolo T."/>
            <person name="Dubois E."/>
            <person name="Duesterhoeft A."/>
            <person name="Duncan M."/>
            <person name="Floeth M."/>
            <person name="Fortin N."/>
            <person name="Friesen J.D."/>
            <person name="Fritz C."/>
            <person name="Goffeau A."/>
            <person name="Hall J."/>
            <person name="Hebling U."/>
            <person name="Heumann K."/>
            <person name="Hilbert H."/>
            <person name="Hillier L.W."/>
            <person name="Hunicke-Smith S."/>
            <person name="Hyman R.W."/>
            <person name="Johnston M."/>
            <person name="Kalman S."/>
            <person name="Kleine K."/>
            <person name="Komp C."/>
            <person name="Kurdi O."/>
            <person name="Lashkari D."/>
            <person name="Lew H."/>
            <person name="Lin A."/>
            <person name="Lin D."/>
            <person name="Louis E.J."/>
            <person name="Marathe R."/>
            <person name="Messenguy F."/>
            <person name="Mewes H.-W."/>
            <person name="Mirtipati S."/>
            <person name="Moestl D."/>
            <person name="Mueller-Auer S."/>
            <person name="Namath A."/>
            <person name="Nentwich U."/>
            <person name="Oefner P."/>
            <person name="Pearson D."/>
            <person name="Petel F.X."/>
            <person name="Pohl T.M."/>
            <person name="Purnelle B."/>
            <person name="Rajandream M.A."/>
            <person name="Rechmann S."/>
            <person name="Rieger M."/>
            <person name="Riles L."/>
            <person name="Roberts D."/>
            <person name="Schaefer M."/>
            <person name="Scharfe M."/>
            <person name="Scherens B."/>
            <person name="Schramm S."/>
            <person name="Schroeder M."/>
            <person name="Sdicu A.-M."/>
            <person name="Tettelin H."/>
            <person name="Urrestarazu L.A."/>
            <person name="Ushinsky S."/>
            <person name="Vierendeels F."/>
            <person name="Vissers S."/>
            <person name="Voss H."/>
            <person name="Walsh S.V."/>
            <person name="Wambutt R."/>
            <person name="Wang Y."/>
            <person name="Wedler E."/>
            <person name="Wedler H."/>
            <person name="Winnett E."/>
            <person name="Zhong W.-W."/>
            <person name="Zollner A."/>
            <person name="Vo D.H."/>
            <person name="Hani J."/>
        </authorList>
    </citation>
    <scope>NUCLEOTIDE SEQUENCE [LARGE SCALE GENOMIC DNA]</scope>
    <source>
        <strain>ATCC 204508 / S288c</strain>
    </source>
</reference>
<reference key="3">
    <citation type="journal article" date="2014" name="G3 (Bethesda)">
        <title>The reference genome sequence of Saccharomyces cerevisiae: Then and now.</title>
        <authorList>
            <person name="Engel S.R."/>
            <person name="Dietrich F.S."/>
            <person name="Fisk D.G."/>
            <person name="Binkley G."/>
            <person name="Balakrishnan R."/>
            <person name="Costanzo M.C."/>
            <person name="Dwight S.S."/>
            <person name="Hitz B.C."/>
            <person name="Karra K."/>
            <person name="Nash R.S."/>
            <person name="Weng S."/>
            <person name="Wong E.D."/>
            <person name="Lloyd P."/>
            <person name="Skrzypek M.S."/>
            <person name="Miyasato S.R."/>
            <person name="Simison M."/>
            <person name="Cherry J.M."/>
        </authorList>
    </citation>
    <scope>GENOME REANNOTATION</scope>
    <source>
        <strain>ATCC 204508 / S288c</strain>
    </source>
</reference>
<reference key="4">
    <citation type="journal article" date="2007" name="Genome Res.">
        <title>Approaching a complete repository of sequence-verified protein-encoding clones for Saccharomyces cerevisiae.</title>
        <authorList>
            <person name="Hu Y."/>
            <person name="Rolfs A."/>
            <person name="Bhullar B."/>
            <person name="Murthy T.V.S."/>
            <person name="Zhu C."/>
            <person name="Berger M.F."/>
            <person name="Camargo A.A."/>
            <person name="Kelley F."/>
            <person name="McCarron S."/>
            <person name="Jepson D."/>
            <person name="Richardson A."/>
            <person name="Raphael J."/>
            <person name="Moreira D."/>
            <person name="Taycher E."/>
            <person name="Zuo D."/>
            <person name="Mohr S."/>
            <person name="Kane M.F."/>
            <person name="Williamson J."/>
            <person name="Simpson A.J.G."/>
            <person name="Bulyk M.L."/>
            <person name="Harlow E."/>
            <person name="Marsischky G."/>
            <person name="Kolodner R.D."/>
            <person name="LaBaer J."/>
        </authorList>
    </citation>
    <scope>NUCLEOTIDE SEQUENCE [GENOMIC DNA]</scope>
    <source>
        <strain>ATCC 204508 / S288c</strain>
    </source>
</reference>
<reference key="5">
    <citation type="journal article" date="1991" name="J. Biol. Chem.">
        <title>Isolation and complete amino acid sequence of the mitochondrial ATP synthase epsilon-subunit of the yeast Saccharomyces cerevisiae.</title>
        <authorList>
            <person name="Arselin G."/>
            <person name="Gandar J.-C."/>
            <person name="Guerin B."/>
            <person name="Velours J."/>
        </authorList>
    </citation>
    <scope>PROTEIN SEQUENCE OF 2-62</scope>
    <source>
        <strain>ATCC 60782 / S / NCYC 232 / American yeast foam</strain>
    </source>
</reference>
<reference key="6">
    <citation type="journal article" date="2003" name="Nature">
        <title>Global analysis of protein expression in yeast.</title>
        <authorList>
            <person name="Ghaemmaghami S."/>
            <person name="Huh W.-K."/>
            <person name="Bower K."/>
            <person name="Howson R.W."/>
            <person name="Belle A."/>
            <person name="Dephoure N."/>
            <person name="O'Shea E.K."/>
            <person name="Weissman J.S."/>
        </authorList>
    </citation>
    <scope>LEVEL OF PROTEIN EXPRESSION [LARGE SCALE ANALYSIS]</scope>
</reference>
<reference key="7">
    <citation type="journal article" date="2007" name="Mol. Cell. Proteomics">
        <title>Profiling phosphoproteins of yeast mitochondria reveals a role of phosphorylation in assembly of the ATP synthase.</title>
        <authorList>
            <person name="Reinders J."/>
            <person name="Wagner K."/>
            <person name="Zahedi R.P."/>
            <person name="Stojanovski D."/>
            <person name="Eyrich B."/>
            <person name="van der Laan M."/>
            <person name="Rehling P."/>
            <person name="Sickmann A."/>
            <person name="Pfanner N."/>
            <person name="Meisinger C."/>
        </authorList>
    </citation>
    <scope>PHOSPHORYLATION [LARGE SCALE ANALYSIS] AT THR-52</scope>
    <scope>IDENTIFICATION BY MASS SPECTROMETRY [LARGE SCALE ANALYSIS]</scope>
    <source>
        <strain>ATCC 76625 / YPH499</strain>
    </source>
</reference>
<comment type="function">
    <text>Mitochondrial membrane ATP synthase (F(1)F(0) ATP synthase or Complex V) produces ATP from ADP in the presence of a proton gradient across the membrane which is generated by electron transport complexes of the respiratory chain. F-type ATPases consist of two structural domains, F(1) - containing the extramembraneous catalytic core, and F(0) - containing the membrane proton channel, linked together by a central stalk and a peripheral stalk. During catalysis, ATP synthesis in the catalytic domain of F(1) is coupled via a rotary mechanism of the central stalk subunits to proton translocation. Part of the complex F(1) domain and of the central stalk which is part of the complex rotary element. Rotation of the central stalk against the surrounding alpha(3)beta(3) subunits leads to hydrolysis of ATP in three separate catalytic sites on the beta subunits.</text>
</comment>
<comment type="subunit">
    <text>F-type ATPases have 2 components, CF(1) - the catalytic core - and CF(0) - the membrane proton channel. CF(1) has five subunits: alpha(3), beta(3), gamma(1), delta(1), epsilon(1). CF(0) has three main subunits: a, b and c.</text>
</comment>
<comment type="subcellular location">
    <subcellularLocation>
        <location>Mitochondrion</location>
    </subcellularLocation>
    <subcellularLocation>
        <location>Mitochondrion inner membrane</location>
    </subcellularLocation>
</comment>
<comment type="miscellaneous">
    <text evidence="1">Present with 4280 molecules/cell in log phase SD medium.</text>
</comment>
<comment type="similarity">
    <text evidence="3">Belongs to the eukaryotic ATPase epsilon family.</text>
</comment>
<keyword id="KW-0002">3D-structure</keyword>
<keyword id="KW-0066">ATP synthesis</keyword>
<keyword id="KW-0139">CF(1)</keyword>
<keyword id="KW-0903">Direct protein sequencing</keyword>
<keyword id="KW-0375">Hydrogen ion transport</keyword>
<keyword id="KW-0406">Ion transport</keyword>
<keyword id="KW-0472">Membrane</keyword>
<keyword id="KW-0496">Mitochondrion</keyword>
<keyword id="KW-0999">Mitochondrion inner membrane</keyword>
<keyword id="KW-0597">Phosphoprotein</keyword>
<keyword id="KW-1185">Reference proteome</keyword>
<keyword id="KW-0813">Transport</keyword>
<gene>
    <name type="primary">ATP15</name>
    <name type="ordered locus">YPL271W</name>
    <name type="ORF">P0345</name>
</gene>
<proteinExistence type="evidence at protein level"/>
<protein>
    <recommendedName>
        <fullName>ATP synthase subunit epsilon, mitochondrial</fullName>
        <shortName>ATPase subunit epsilon</shortName>
    </recommendedName>
</protein>